<organism>
    <name type="scientific">Streptococcus pneumoniae (strain JJA)</name>
    <dbReference type="NCBI Taxonomy" id="488222"/>
    <lineage>
        <taxon>Bacteria</taxon>
        <taxon>Bacillati</taxon>
        <taxon>Bacillota</taxon>
        <taxon>Bacilli</taxon>
        <taxon>Lactobacillales</taxon>
        <taxon>Streptococcaceae</taxon>
        <taxon>Streptococcus</taxon>
    </lineage>
</organism>
<keyword id="KW-0963">Cytoplasm</keyword>
<keyword id="KW-0227">DNA damage</keyword>
<keyword id="KW-0233">DNA recombination</keyword>
<keyword id="KW-0234">DNA repair</keyword>
<keyword id="KW-0238">DNA-binding</keyword>
<accession>C1CBY3</accession>
<reference key="1">
    <citation type="journal article" date="2010" name="Genome Biol.">
        <title>Structure and dynamics of the pan-genome of Streptococcus pneumoniae and closely related species.</title>
        <authorList>
            <person name="Donati C."/>
            <person name="Hiller N.L."/>
            <person name="Tettelin H."/>
            <person name="Muzzi A."/>
            <person name="Croucher N.J."/>
            <person name="Angiuoli S.V."/>
            <person name="Oggioni M."/>
            <person name="Dunning Hotopp J.C."/>
            <person name="Hu F.Z."/>
            <person name="Riley D.R."/>
            <person name="Covacci A."/>
            <person name="Mitchell T.J."/>
            <person name="Bentley S.D."/>
            <person name="Kilian M."/>
            <person name="Ehrlich G.D."/>
            <person name="Rappuoli R."/>
            <person name="Moxon E.R."/>
            <person name="Masignani V."/>
        </authorList>
    </citation>
    <scope>NUCLEOTIDE SEQUENCE [LARGE SCALE GENOMIC DNA]</scope>
    <source>
        <strain>JJA</strain>
    </source>
</reference>
<gene>
    <name evidence="1" type="primary">ruvA</name>
    <name type="ordered locus">SPJ_0196</name>
</gene>
<sequence>MYAYLKGIITKITAKYIVLETNGIGYILHVANPYAYSGQVNQEDQIYVHQVVREDAHLLYGFRSEDEKKLFLSLISVSGIGPVSALAIIAADDNAGLVQAIETKNITYLTKFPKIGKKTAQQMVLDLEGKVVVAGDDLPAKVAVQASAENQELEEAMEAMLALGYKATELKKIKKFFEGTTDTAENYIKSALKMLVK</sequence>
<name>RUVA_STRZJ</name>
<comment type="function">
    <text evidence="1">The RuvA-RuvB-RuvC complex processes Holliday junction (HJ) DNA during genetic recombination and DNA repair, while the RuvA-RuvB complex plays an important role in the rescue of blocked DNA replication forks via replication fork reversal (RFR). RuvA specifically binds to HJ cruciform DNA, conferring on it an open structure. The RuvB hexamer acts as an ATP-dependent pump, pulling dsDNA into and through the RuvAB complex. HJ branch migration allows RuvC to scan DNA until it finds its consensus sequence, where it cleaves and resolves the cruciform DNA.</text>
</comment>
<comment type="subunit">
    <text evidence="1">Homotetramer. Forms an RuvA(8)-RuvB(12)-Holliday junction (HJ) complex. HJ DNA is sandwiched between 2 RuvA tetramers; dsDNA enters through RuvA and exits via RuvB. An RuvB hexamer assembles on each DNA strand where it exits the tetramer. Each RuvB hexamer is contacted by two RuvA subunits (via domain III) on 2 adjacent RuvB subunits; this complex drives branch migration. In the full resolvosome a probable DNA-RuvA(4)-RuvB(12)-RuvC(2) complex forms which resolves the HJ.</text>
</comment>
<comment type="subcellular location">
    <subcellularLocation>
        <location evidence="1">Cytoplasm</location>
    </subcellularLocation>
</comment>
<comment type="domain">
    <text evidence="1">Has three domains with a flexible linker between the domains II and III and assumes an 'L' shape. Domain III is highly mobile and contacts RuvB.</text>
</comment>
<comment type="similarity">
    <text evidence="1">Belongs to the RuvA family.</text>
</comment>
<proteinExistence type="inferred from homology"/>
<evidence type="ECO:0000255" key="1">
    <source>
        <dbReference type="HAMAP-Rule" id="MF_00031"/>
    </source>
</evidence>
<feature type="chain" id="PRO_1000116983" description="Holliday junction branch migration complex subunit RuvA">
    <location>
        <begin position="1"/>
        <end position="197"/>
    </location>
</feature>
<feature type="region of interest" description="Domain I" evidence="1">
    <location>
        <begin position="1"/>
        <end position="63"/>
    </location>
</feature>
<feature type="region of interest" description="Domain II" evidence="1">
    <location>
        <begin position="64"/>
        <end position="142"/>
    </location>
</feature>
<feature type="region of interest" description="Flexible linker" evidence="1">
    <location>
        <begin position="143"/>
        <end position="147"/>
    </location>
</feature>
<feature type="region of interest" description="Domain III" evidence="1">
    <location>
        <begin position="148"/>
        <end position="197"/>
    </location>
</feature>
<dbReference type="EMBL" id="CP000919">
    <property type="protein sequence ID" value="ACO18328.1"/>
    <property type="molecule type" value="Genomic_DNA"/>
</dbReference>
<dbReference type="RefSeq" id="WP_000271493.1">
    <property type="nucleotide sequence ID" value="NC_012466.1"/>
</dbReference>
<dbReference type="SMR" id="C1CBY3"/>
<dbReference type="GeneID" id="45652332"/>
<dbReference type="KEGG" id="sjj:SPJ_0196"/>
<dbReference type="HOGENOM" id="CLU_087936_1_0_9"/>
<dbReference type="Proteomes" id="UP000002206">
    <property type="component" value="Chromosome"/>
</dbReference>
<dbReference type="GO" id="GO:0005737">
    <property type="term" value="C:cytoplasm"/>
    <property type="evidence" value="ECO:0007669"/>
    <property type="project" value="UniProtKB-SubCell"/>
</dbReference>
<dbReference type="GO" id="GO:0009379">
    <property type="term" value="C:Holliday junction helicase complex"/>
    <property type="evidence" value="ECO:0007669"/>
    <property type="project" value="InterPro"/>
</dbReference>
<dbReference type="GO" id="GO:0048476">
    <property type="term" value="C:Holliday junction resolvase complex"/>
    <property type="evidence" value="ECO:0007669"/>
    <property type="project" value="UniProtKB-UniRule"/>
</dbReference>
<dbReference type="GO" id="GO:0005524">
    <property type="term" value="F:ATP binding"/>
    <property type="evidence" value="ECO:0007669"/>
    <property type="project" value="InterPro"/>
</dbReference>
<dbReference type="GO" id="GO:0000400">
    <property type="term" value="F:four-way junction DNA binding"/>
    <property type="evidence" value="ECO:0007669"/>
    <property type="project" value="UniProtKB-UniRule"/>
</dbReference>
<dbReference type="GO" id="GO:0009378">
    <property type="term" value="F:four-way junction helicase activity"/>
    <property type="evidence" value="ECO:0007669"/>
    <property type="project" value="InterPro"/>
</dbReference>
<dbReference type="GO" id="GO:0006310">
    <property type="term" value="P:DNA recombination"/>
    <property type="evidence" value="ECO:0007669"/>
    <property type="project" value="UniProtKB-UniRule"/>
</dbReference>
<dbReference type="GO" id="GO:0006281">
    <property type="term" value="P:DNA repair"/>
    <property type="evidence" value="ECO:0007669"/>
    <property type="project" value="UniProtKB-UniRule"/>
</dbReference>
<dbReference type="CDD" id="cd14332">
    <property type="entry name" value="UBA_RuvA_C"/>
    <property type="match status" value="1"/>
</dbReference>
<dbReference type="Gene3D" id="1.10.150.20">
    <property type="entry name" value="5' to 3' exonuclease, C-terminal subdomain"/>
    <property type="match status" value="1"/>
</dbReference>
<dbReference type="Gene3D" id="1.10.8.10">
    <property type="entry name" value="DNA helicase RuvA subunit, C-terminal domain"/>
    <property type="match status" value="1"/>
</dbReference>
<dbReference type="Gene3D" id="2.40.50.140">
    <property type="entry name" value="Nucleic acid-binding proteins"/>
    <property type="match status" value="1"/>
</dbReference>
<dbReference type="HAMAP" id="MF_00031">
    <property type="entry name" value="DNA_HJ_migration_RuvA"/>
    <property type="match status" value="1"/>
</dbReference>
<dbReference type="InterPro" id="IPR013849">
    <property type="entry name" value="DNA_helicase_Holl-junc_RuvA_I"/>
</dbReference>
<dbReference type="InterPro" id="IPR003583">
    <property type="entry name" value="Hlx-hairpin-Hlx_DNA-bd_motif"/>
</dbReference>
<dbReference type="InterPro" id="IPR012340">
    <property type="entry name" value="NA-bd_OB-fold"/>
</dbReference>
<dbReference type="InterPro" id="IPR000085">
    <property type="entry name" value="RuvA"/>
</dbReference>
<dbReference type="InterPro" id="IPR010994">
    <property type="entry name" value="RuvA_2-like"/>
</dbReference>
<dbReference type="InterPro" id="IPR011114">
    <property type="entry name" value="RuvA_C"/>
</dbReference>
<dbReference type="InterPro" id="IPR036267">
    <property type="entry name" value="RuvA_C_sf"/>
</dbReference>
<dbReference type="NCBIfam" id="TIGR00084">
    <property type="entry name" value="ruvA"/>
    <property type="match status" value="1"/>
</dbReference>
<dbReference type="Pfam" id="PF14520">
    <property type="entry name" value="HHH_5"/>
    <property type="match status" value="1"/>
</dbReference>
<dbReference type="Pfam" id="PF07499">
    <property type="entry name" value="RuvA_C"/>
    <property type="match status" value="1"/>
</dbReference>
<dbReference type="Pfam" id="PF01330">
    <property type="entry name" value="RuvA_N"/>
    <property type="match status" value="1"/>
</dbReference>
<dbReference type="SMART" id="SM00278">
    <property type="entry name" value="HhH1"/>
    <property type="match status" value="2"/>
</dbReference>
<dbReference type="SUPFAM" id="SSF46929">
    <property type="entry name" value="DNA helicase RuvA subunit, C-terminal domain"/>
    <property type="match status" value="1"/>
</dbReference>
<dbReference type="SUPFAM" id="SSF50249">
    <property type="entry name" value="Nucleic acid-binding proteins"/>
    <property type="match status" value="1"/>
</dbReference>
<dbReference type="SUPFAM" id="SSF47781">
    <property type="entry name" value="RuvA domain 2-like"/>
    <property type="match status" value="1"/>
</dbReference>
<protein>
    <recommendedName>
        <fullName evidence="1">Holliday junction branch migration complex subunit RuvA</fullName>
    </recommendedName>
</protein>